<protein>
    <recommendedName>
        <fullName evidence="1">Hydrogenase maturation factor HypA</fullName>
    </recommendedName>
</protein>
<organism>
    <name type="scientific">Methanosarcina acetivorans (strain ATCC 35395 / DSM 2834 / JCM 12185 / C2A)</name>
    <dbReference type="NCBI Taxonomy" id="188937"/>
    <lineage>
        <taxon>Archaea</taxon>
        <taxon>Methanobacteriati</taxon>
        <taxon>Methanobacteriota</taxon>
        <taxon>Stenosarchaea group</taxon>
        <taxon>Methanomicrobia</taxon>
        <taxon>Methanosarcinales</taxon>
        <taxon>Methanosarcinaceae</taxon>
        <taxon>Methanosarcina</taxon>
    </lineage>
</organism>
<comment type="function">
    <text evidence="1">Involved in the maturation of [NiFe] hydrogenases. Required for nickel insertion into the metal center of the hydrogenase.</text>
</comment>
<comment type="similarity">
    <text evidence="1">Belongs to the HypA/HybF family.</text>
</comment>
<sequence>MHEYSIACEIFEQVIETAKVHGALEVRHVTLEMGRLSHTNPEQLSFCFKAIAEGSIAENAEFIVETIPPSLECECGYTGTVDETQIGKNDELQSELLEYIAALECPVCGKNARIIGGRELIVKSIEIETEVEQ</sequence>
<feature type="chain" id="PRO_0000129076" description="Hydrogenase maturation factor HypA">
    <location>
        <begin position="1"/>
        <end position="133"/>
    </location>
</feature>
<feature type="binding site" evidence="1">
    <location>
        <position position="2"/>
    </location>
    <ligand>
        <name>Ni(2+)</name>
        <dbReference type="ChEBI" id="CHEBI:49786"/>
    </ligand>
</feature>
<feature type="binding site" evidence="1">
    <location>
        <position position="73"/>
    </location>
    <ligand>
        <name>Zn(2+)</name>
        <dbReference type="ChEBI" id="CHEBI:29105"/>
    </ligand>
</feature>
<feature type="binding site" evidence="1">
    <location>
        <position position="75"/>
    </location>
    <ligand>
        <name>Zn(2+)</name>
        <dbReference type="ChEBI" id="CHEBI:29105"/>
    </ligand>
</feature>
<feature type="binding site" evidence="1">
    <location>
        <position position="105"/>
    </location>
    <ligand>
        <name>Zn(2+)</name>
        <dbReference type="ChEBI" id="CHEBI:29105"/>
    </ligand>
</feature>
<feature type="binding site" evidence="1">
    <location>
        <position position="108"/>
    </location>
    <ligand>
        <name>Zn(2+)</name>
        <dbReference type="ChEBI" id="CHEBI:29105"/>
    </ligand>
</feature>
<evidence type="ECO:0000255" key="1">
    <source>
        <dbReference type="HAMAP-Rule" id="MF_00213"/>
    </source>
</evidence>
<name>HYPA_METAC</name>
<keyword id="KW-0479">Metal-binding</keyword>
<keyword id="KW-0533">Nickel</keyword>
<keyword id="KW-1185">Reference proteome</keyword>
<keyword id="KW-0862">Zinc</keyword>
<gene>
    <name evidence="1" type="primary">hypA</name>
    <name type="ordered locus">MA_1138</name>
</gene>
<reference key="1">
    <citation type="journal article" date="2002" name="Genome Res.">
        <title>The genome of Methanosarcina acetivorans reveals extensive metabolic and physiological diversity.</title>
        <authorList>
            <person name="Galagan J.E."/>
            <person name="Nusbaum C."/>
            <person name="Roy A."/>
            <person name="Endrizzi M.G."/>
            <person name="Macdonald P."/>
            <person name="FitzHugh W."/>
            <person name="Calvo S."/>
            <person name="Engels R."/>
            <person name="Smirnov S."/>
            <person name="Atnoor D."/>
            <person name="Brown A."/>
            <person name="Allen N."/>
            <person name="Naylor J."/>
            <person name="Stange-Thomann N."/>
            <person name="DeArellano K."/>
            <person name="Johnson R."/>
            <person name="Linton L."/>
            <person name="McEwan P."/>
            <person name="McKernan K."/>
            <person name="Talamas J."/>
            <person name="Tirrell A."/>
            <person name="Ye W."/>
            <person name="Zimmer A."/>
            <person name="Barber R.D."/>
            <person name="Cann I."/>
            <person name="Graham D.E."/>
            <person name="Grahame D.A."/>
            <person name="Guss A.M."/>
            <person name="Hedderich R."/>
            <person name="Ingram-Smith C."/>
            <person name="Kuettner H.C."/>
            <person name="Krzycki J.A."/>
            <person name="Leigh J.A."/>
            <person name="Li W."/>
            <person name="Liu J."/>
            <person name="Mukhopadhyay B."/>
            <person name="Reeve J.N."/>
            <person name="Smith K."/>
            <person name="Springer T.A."/>
            <person name="Umayam L.A."/>
            <person name="White O."/>
            <person name="White R.H."/>
            <person name="de Macario E.C."/>
            <person name="Ferry J.G."/>
            <person name="Jarrell K.F."/>
            <person name="Jing H."/>
            <person name="Macario A.J.L."/>
            <person name="Paulsen I.T."/>
            <person name="Pritchett M."/>
            <person name="Sowers K.R."/>
            <person name="Swanson R.V."/>
            <person name="Zinder S.H."/>
            <person name="Lander E."/>
            <person name="Metcalf W.W."/>
            <person name="Birren B."/>
        </authorList>
    </citation>
    <scope>NUCLEOTIDE SEQUENCE [LARGE SCALE GENOMIC DNA]</scope>
    <source>
        <strain>ATCC 35395 / DSM 2834 / JCM 12185 / C2A</strain>
    </source>
</reference>
<accession>Q8TRN7</accession>
<proteinExistence type="inferred from homology"/>
<dbReference type="EMBL" id="AE010299">
    <property type="protein sequence ID" value="AAM04559.1"/>
    <property type="molecule type" value="Genomic_DNA"/>
</dbReference>
<dbReference type="RefSeq" id="WP_011021162.1">
    <property type="nucleotide sequence ID" value="NC_003552.1"/>
</dbReference>
<dbReference type="SMR" id="Q8TRN7"/>
<dbReference type="STRING" id="188937.MA_1138"/>
<dbReference type="DNASU" id="1473026"/>
<dbReference type="EnsemblBacteria" id="AAM04559">
    <property type="protein sequence ID" value="AAM04559"/>
    <property type="gene ID" value="MA_1138"/>
</dbReference>
<dbReference type="GeneID" id="1473026"/>
<dbReference type="KEGG" id="mac:MA_1138"/>
<dbReference type="HOGENOM" id="CLU_126929_2_0_2"/>
<dbReference type="InParanoid" id="Q8TRN7"/>
<dbReference type="OrthoDB" id="36835at2157"/>
<dbReference type="PhylomeDB" id="Q8TRN7"/>
<dbReference type="Proteomes" id="UP000002487">
    <property type="component" value="Chromosome"/>
</dbReference>
<dbReference type="GO" id="GO:0016151">
    <property type="term" value="F:nickel cation binding"/>
    <property type="evidence" value="ECO:0000318"/>
    <property type="project" value="GO_Central"/>
</dbReference>
<dbReference type="GO" id="GO:0008270">
    <property type="term" value="F:zinc ion binding"/>
    <property type="evidence" value="ECO:0000318"/>
    <property type="project" value="GO_Central"/>
</dbReference>
<dbReference type="GO" id="GO:0051604">
    <property type="term" value="P:protein maturation"/>
    <property type="evidence" value="ECO:0000318"/>
    <property type="project" value="GO_Central"/>
</dbReference>
<dbReference type="GO" id="GO:0036211">
    <property type="term" value="P:protein modification process"/>
    <property type="evidence" value="ECO:0007669"/>
    <property type="project" value="UniProtKB-UniRule"/>
</dbReference>
<dbReference type="Gene3D" id="3.30.2320.80">
    <property type="match status" value="1"/>
</dbReference>
<dbReference type="HAMAP" id="MF_00213">
    <property type="entry name" value="HypA_HybF"/>
    <property type="match status" value="1"/>
</dbReference>
<dbReference type="InterPro" id="IPR020538">
    <property type="entry name" value="Hydgase_Ni_incorp_HypA/HybF_CS"/>
</dbReference>
<dbReference type="InterPro" id="IPR000688">
    <property type="entry name" value="HypA/HybF"/>
</dbReference>
<dbReference type="NCBIfam" id="NF001976">
    <property type="entry name" value="PRK00762.1"/>
    <property type="match status" value="1"/>
</dbReference>
<dbReference type="PANTHER" id="PTHR34535">
    <property type="entry name" value="HYDROGENASE MATURATION FACTOR HYPA"/>
    <property type="match status" value="1"/>
</dbReference>
<dbReference type="PANTHER" id="PTHR34535:SF3">
    <property type="entry name" value="HYDROGENASE MATURATION FACTOR HYPA"/>
    <property type="match status" value="1"/>
</dbReference>
<dbReference type="Pfam" id="PF01155">
    <property type="entry name" value="HypA"/>
    <property type="match status" value="1"/>
</dbReference>
<dbReference type="PIRSF" id="PIRSF004761">
    <property type="entry name" value="Hydrgn_mat_HypA"/>
    <property type="match status" value="1"/>
</dbReference>
<dbReference type="PROSITE" id="PS01249">
    <property type="entry name" value="HYPA"/>
    <property type="match status" value="1"/>
</dbReference>